<gene>
    <name type="primary">MT-ND5</name>
    <name type="synonym">MTND5</name>
    <name type="synonym">NADH5</name>
    <name type="synonym">ND5</name>
</gene>
<name>NU5M_ANSCE</name>
<geneLocation type="mitochondrion"/>
<feature type="chain" id="PRO_0000118057" description="NADH-ubiquinone oxidoreductase chain 5">
    <location>
        <begin position="1" status="less than"/>
        <end position="214"/>
    </location>
</feature>
<feature type="transmembrane region" description="Helical" evidence="2">
    <location>
        <begin position="14"/>
        <end position="34"/>
    </location>
</feature>
<feature type="transmembrane region" description="Helical" evidence="2">
    <location>
        <begin position="58"/>
        <end position="78"/>
    </location>
</feature>
<feature type="transmembrane region" description="Helical" evidence="2">
    <location>
        <begin position="92"/>
        <end position="112"/>
    </location>
</feature>
<feature type="transmembrane region" description="Helical" evidence="2">
    <location>
        <begin position="192"/>
        <end position="212"/>
    </location>
</feature>
<feature type="non-terminal residue">
    <location>
        <position position="1"/>
    </location>
</feature>
<comment type="function">
    <text evidence="1">Core subunit of the mitochondrial membrane respiratory chain NADH dehydrogenase (Complex I) that is believed to belong to the minimal assembly required for catalysis. Complex I functions in the transfer of electrons from NADH to the respiratory chain. The immediate electron acceptor for the enzyme is believed to be ubiquinone (By similarity).</text>
</comment>
<comment type="catalytic activity">
    <reaction>
        <text>a ubiquinone + NADH + 5 H(+)(in) = a ubiquinol + NAD(+) + 4 H(+)(out)</text>
        <dbReference type="Rhea" id="RHEA:29091"/>
        <dbReference type="Rhea" id="RHEA-COMP:9565"/>
        <dbReference type="Rhea" id="RHEA-COMP:9566"/>
        <dbReference type="ChEBI" id="CHEBI:15378"/>
        <dbReference type="ChEBI" id="CHEBI:16389"/>
        <dbReference type="ChEBI" id="CHEBI:17976"/>
        <dbReference type="ChEBI" id="CHEBI:57540"/>
        <dbReference type="ChEBI" id="CHEBI:57945"/>
        <dbReference type="EC" id="7.1.1.2"/>
    </reaction>
</comment>
<comment type="subcellular location">
    <subcellularLocation>
        <location evidence="1">Mitochondrion inner membrane</location>
        <topology evidence="1">Multi-pass membrane protein</topology>
    </subcellularLocation>
</comment>
<comment type="similarity">
    <text evidence="3">Belongs to the complex I subunit 5 family.</text>
</comment>
<organism>
    <name type="scientific">Anser caerulescens</name>
    <name type="common">Snow goose</name>
    <name type="synonym">Chen caerulescens</name>
    <dbReference type="NCBI Taxonomy" id="8849"/>
    <lineage>
        <taxon>Eukaryota</taxon>
        <taxon>Metazoa</taxon>
        <taxon>Chordata</taxon>
        <taxon>Craniata</taxon>
        <taxon>Vertebrata</taxon>
        <taxon>Euteleostomi</taxon>
        <taxon>Archelosauria</taxon>
        <taxon>Archosauria</taxon>
        <taxon>Dinosauria</taxon>
        <taxon>Saurischia</taxon>
        <taxon>Theropoda</taxon>
        <taxon>Coelurosauria</taxon>
        <taxon>Aves</taxon>
        <taxon>Neognathae</taxon>
        <taxon>Galloanserae</taxon>
        <taxon>Anseriformes</taxon>
        <taxon>Anatidae</taxon>
        <taxon>Anserinae</taxon>
        <taxon>Anser</taxon>
    </lineage>
</organism>
<evidence type="ECO:0000250" key="1"/>
<evidence type="ECO:0000255" key="2"/>
<evidence type="ECO:0000305" key="3"/>
<protein>
    <recommendedName>
        <fullName>NADH-ubiquinone oxidoreductase chain 5</fullName>
        <ecNumber>7.1.1.2</ecNumber>
    </recommendedName>
    <alternativeName>
        <fullName>NADH dehydrogenase subunit 5</fullName>
    </alternativeName>
</protein>
<dbReference type="EC" id="7.1.1.2"/>
<dbReference type="EMBL" id="X75772">
    <property type="protein sequence ID" value="CAA53393.1"/>
    <property type="molecule type" value="Genomic_DNA"/>
</dbReference>
<dbReference type="PIR" id="S42244">
    <property type="entry name" value="S42244"/>
</dbReference>
<dbReference type="SMR" id="Q31651"/>
<dbReference type="GO" id="GO:0005743">
    <property type="term" value="C:mitochondrial inner membrane"/>
    <property type="evidence" value="ECO:0007669"/>
    <property type="project" value="UniProtKB-SubCell"/>
</dbReference>
<dbReference type="GO" id="GO:0008137">
    <property type="term" value="F:NADH dehydrogenase (ubiquinone) activity"/>
    <property type="evidence" value="ECO:0007669"/>
    <property type="project" value="UniProtKB-EC"/>
</dbReference>
<dbReference type="GO" id="GO:0042773">
    <property type="term" value="P:ATP synthesis coupled electron transport"/>
    <property type="evidence" value="ECO:0007669"/>
    <property type="project" value="InterPro"/>
</dbReference>
<dbReference type="GO" id="GO:0015990">
    <property type="term" value="P:electron transport coupled proton transport"/>
    <property type="evidence" value="ECO:0007669"/>
    <property type="project" value="TreeGrafter"/>
</dbReference>
<dbReference type="InterPro" id="IPR010934">
    <property type="entry name" value="NADH_DH_su5_C"/>
</dbReference>
<dbReference type="InterPro" id="IPR003945">
    <property type="entry name" value="NU5C-like"/>
</dbReference>
<dbReference type="PANTHER" id="PTHR42829">
    <property type="entry name" value="NADH-UBIQUINONE OXIDOREDUCTASE CHAIN 5"/>
    <property type="match status" value="1"/>
</dbReference>
<dbReference type="PANTHER" id="PTHR42829:SF2">
    <property type="entry name" value="NADH-UBIQUINONE OXIDOREDUCTASE CHAIN 5"/>
    <property type="match status" value="1"/>
</dbReference>
<dbReference type="Pfam" id="PF06455">
    <property type="entry name" value="NADH5_C"/>
    <property type="match status" value="1"/>
</dbReference>
<reference key="1">
    <citation type="journal article" date="1993" name="J. Mol. Evol.">
        <title>Sequence evolution in and around the mitochondrial control region in birds.</title>
        <authorList>
            <person name="Quinn T.W."/>
            <person name="Wilson A.C."/>
        </authorList>
    </citation>
    <scope>NUCLEOTIDE SEQUENCE [GENOMIC DNA]</scope>
</reference>
<accession>Q31651</accession>
<keyword id="KW-0249">Electron transport</keyword>
<keyword id="KW-0472">Membrane</keyword>
<keyword id="KW-0496">Mitochondrion</keyword>
<keyword id="KW-0999">Mitochondrion inner membrane</keyword>
<keyword id="KW-0520">NAD</keyword>
<keyword id="KW-0679">Respiratory chain</keyword>
<keyword id="KW-1278">Translocase</keyword>
<keyword id="KW-0812">Transmembrane</keyword>
<keyword id="KW-1133">Transmembrane helix</keyword>
<keyword id="KW-0813">Transport</keyword>
<keyword id="KW-0830">Ubiquinone</keyword>
<proteinExistence type="inferred from homology"/>
<sequence length="214" mass="23231">GSVDLQPSLNTSYLNTWALLLTLMATAFTATYSIRMTILVQAGQTRIPPMVSMNENNPLITAPLTRLALGSITAGMIITSFITPTKTPPMTMPLITKTAAILMTILGIILALELSNMTHTLTYPKPNPLMNFSSALGYFNPLVHRFFSKNLLEKGQNIALHLIDLSWLKKMGPEGLAELQVAASKAATSMHTGLIKAYLGSFALSILVMILMTH</sequence>